<reference key="1">
    <citation type="journal article" date="1994" name="Proc. Natl. Acad. Sci. U.S.A.">
        <title>Cloning, expression, and localization of a chloride-facilitated, cocaine-sensitive serotonin transporter from Drosophila melanogaster.</title>
        <authorList>
            <person name="Demchyshyn L.L."/>
            <person name="Pristupa Z.B."/>
            <person name="Sugamori K.S."/>
            <person name="Barker E.L."/>
            <person name="Blakely R.D."/>
            <person name="Wolfgang W.J."/>
            <person name="Forte M.A."/>
            <person name="Niznik H.B."/>
        </authorList>
    </citation>
    <scope>NUCLEOTIDE SEQUENCE [MRNA]</scope>
    <scope>FUNCTION</scope>
    <scope>SUBCELLULAR LOCATION</scope>
    <scope>TISSUE SPECIFICITY</scope>
    <source>
        <strain>Canton-S</strain>
        <tissue>Head</tissue>
    </source>
</reference>
<reference key="2">
    <citation type="journal article" date="2000" name="Science">
        <title>The genome sequence of Drosophila melanogaster.</title>
        <authorList>
            <person name="Adams M.D."/>
            <person name="Celniker S.E."/>
            <person name="Holt R.A."/>
            <person name="Evans C.A."/>
            <person name="Gocayne J.D."/>
            <person name="Amanatides P.G."/>
            <person name="Scherer S.E."/>
            <person name="Li P.W."/>
            <person name="Hoskins R.A."/>
            <person name="Galle R.F."/>
            <person name="George R.A."/>
            <person name="Lewis S.E."/>
            <person name="Richards S."/>
            <person name="Ashburner M."/>
            <person name="Henderson S.N."/>
            <person name="Sutton G.G."/>
            <person name="Wortman J.R."/>
            <person name="Yandell M.D."/>
            <person name="Zhang Q."/>
            <person name="Chen L.X."/>
            <person name="Brandon R.C."/>
            <person name="Rogers Y.-H.C."/>
            <person name="Blazej R.G."/>
            <person name="Champe M."/>
            <person name="Pfeiffer B.D."/>
            <person name="Wan K.H."/>
            <person name="Doyle C."/>
            <person name="Baxter E.G."/>
            <person name="Helt G."/>
            <person name="Nelson C.R."/>
            <person name="Miklos G.L.G."/>
            <person name="Abril J.F."/>
            <person name="Agbayani A."/>
            <person name="An H.-J."/>
            <person name="Andrews-Pfannkoch C."/>
            <person name="Baldwin D."/>
            <person name="Ballew R.M."/>
            <person name="Basu A."/>
            <person name="Baxendale J."/>
            <person name="Bayraktaroglu L."/>
            <person name="Beasley E.M."/>
            <person name="Beeson K.Y."/>
            <person name="Benos P.V."/>
            <person name="Berman B.P."/>
            <person name="Bhandari D."/>
            <person name="Bolshakov S."/>
            <person name="Borkova D."/>
            <person name="Botchan M.R."/>
            <person name="Bouck J."/>
            <person name="Brokstein P."/>
            <person name="Brottier P."/>
            <person name="Burtis K.C."/>
            <person name="Busam D.A."/>
            <person name="Butler H."/>
            <person name="Cadieu E."/>
            <person name="Center A."/>
            <person name="Chandra I."/>
            <person name="Cherry J.M."/>
            <person name="Cawley S."/>
            <person name="Dahlke C."/>
            <person name="Davenport L.B."/>
            <person name="Davies P."/>
            <person name="de Pablos B."/>
            <person name="Delcher A."/>
            <person name="Deng Z."/>
            <person name="Mays A.D."/>
            <person name="Dew I."/>
            <person name="Dietz S.M."/>
            <person name="Dodson K."/>
            <person name="Doup L.E."/>
            <person name="Downes M."/>
            <person name="Dugan-Rocha S."/>
            <person name="Dunkov B.C."/>
            <person name="Dunn P."/>
            <person name="Durbin K.J."/>
            <person name="Evangelista C.C."/>
            <person name="Ferraz C."/>
            <person name="Ferriera S."/>
            <person name="Fleischmann W."/>
            <person name="Fosler C."/>
            <person name="Gabrielian A.E."/>
            <person name="Garg N.S."/>
            <person name="Gelbart W.M."/>
            <person name="Glasser K."/>
            <person name="Glodek A."/>
            <person name="Gong F."/>
            <person name="Gorrell J.H."/>
            <person name="Gu Z."/>
            <person name="Guan P."/>
            <person name="Harris M."/>
            <person name="Harris N.L."/>
            <person name="Harvey D.A."/>
            <person name="Heiman T.J."/>
            <person name="Hernandez J.R."/>
            <person name="Houck J."/>
            <person name="Hostin D."/>
            <person name="Houston K.A."/>
            <person name="Howland T.J."/>
            <person name="Wei M.-H."/>
            <person name="Ibegwam C."/>
            <person name="Jalali M."/>
            <person name="Kalush F."/>
            <person name="Karpen G.H."/>
            <person name="Ke Z."/>
            <person name="Kennison J.A."/>
            <person name="Ketchum K.A."/>
            <person name="Kimmel B.E."/>
            <person name="Kodira C.D."/>
            <person name="Kraft C.L."/>
            <person name="Kravitz S."/>
            <person name="Kulp D."/>
            <person name="Lai Z."/>
            <person name="Lasko P."/>
            <person name="Lei Y."/>
            <person name="Levitsky A.A."/>
            <person name="Li J.H."/>
            <person name="Li Z."/>
            <person name="Liang Y."/>
            <person name="Lin X."/>
            <person name="Liu X."/>
            <person name="Mattei B."/>
            <person name="McIntosh T.C."/>
            <person name="McLeod M.P."/>
            <person name="McPherson D."/>
            <person name="Merkulov G."/>
            <person name="Milshina N.V."/>
            <person name="Mobarry C."/>
            <person name="Morris J."/>
            <person name="Moshrefi A."/>
            <person name="Mount S.M."/>
            <person name="Moy M."/>
            <person name="Murphy B."/>
            <person name="Murphy L."/>
            <person name="Muzny D.M."/>
            <person name="Nelson D.L."/>
            <person name="Nelson D.R."/>
            <person name="Nelson K.A."/>
            <person name="Nixon K."/>
            <person name="Nusskern D.R."/>
            <person name="Pacleb J.M."/>
            <person name="Palazzolo M."/>
            <person name="Pittman G.S."/>
            <person name="Pan S."/>
            <person name="Pollard J."/>
            <person name="Puri V."/>
            <person name="Reese M.G."/>
            <person name="Reinert K."/>
            <person name="Remington K."/>
            <person name="Saunders R.D.C."/>
            <person name="Scheeler F."/>
            <person name="Shen H."/>
            <person name="Shue B.C."/>
            <person name="Siden-Kiamos I."/>
            <person name="Simpson M."/>
            <person name="Skupski M.P."/>
            <person name="Smith T.J."/>
            <person name="Spier E."/>
            <person name="Spradling A.C."/>
            <person name="Stapleton M."/>
            <person name="Strong R."/>
            <person name="Sun E."/>
            <person name="Svirskas R."/>
            <person name="Tector C."/>
            <person name="Turner R."/>
            <person name="Venter E."/>
            <person name="Wang A.H."/>
            <person name="Wang X."/>
            <person name="Wang Z.-Y."/>
            <person name="Wassarman D.A."/>
            <person name="Weinstock G.M."/>
            <person name="Weissenbach J."/>
            <person name="Williams S.M."/>
            <person name="Woodage T."/>
            <person name="Worley K.C."/>
            <person name="Wu D."/>
            <person name="Yang S."/>
            <person name="Yao Q.A."/>
            <person name="Ye J."/>
            <person name="Yeh R.-F."/>
            <person name="Zaveri J.S."/>
            <person name="Zhan M."/>
            <person name="Zhang G."/>
            <person name="Zhao Q."/>
            <person name="Zheng L."/>
            <person name="Zheng X.H."/>
            <person name="Zhong F.N."/>
            <person name="Zhong W."/>
            <person name="Zhou X."/>
            <person name="Zhu S.C."/>
            <person name="Zhu X."/>
            <person name="Smith H.O."/>
            <person name="Gibbs R.A."/>
            <person name="Myers E.W."/>
            <person name="Rubin G.M."/>
            <person name="Venter J.C."/>
        </authorList>
    </citation>
    <scope>NUCLEOTIDE SEQUENCE [LARGE SCALE GENOMIC DNA]</scope>
    <source>
        <strain>Berkeley</strain>
    </source>
</reference>
<reference key="3">
    <citation type="journal article" date="2002" name="Genome Biol.">
        <title>Annotation of the Drosophila melanogaster euchromatic genome: a systematic review.</title>
        <authorList>
            <person name="Misra S."/>
            <person name="Crosby M.A."/>
            <person name="Mungall C.J."/>
            <person name="Matthews B.B."/>
            <person name="Campbell K.S."/>
            <person name="Hradecky P."/>
            <person name="Huang Y."/>
            <person name="Kaminker J.S."/>
            <person name="Millburn G.H."/>
            <person name="Prochnik S.E."/>
            <person name="Smith C.D."/>
            <person name="Tupy J.L."/>
            <person name="Whitfield E.J."/>
            <person name="Bayraktaroglu L."/>
            <person name="Berman B.P."/>
            <person name="Bettencourt B.R."/>
            <person name="Celniker S.E."/>
            <person name="de Grey A.D.N.J."/>
            <person name="Drysdale R.A."/>
            <person name="Harris N.L."/>
            <person name="Richter J."/>
            <person name="Russo S."/>
            <person name="Schroeder A.J."/>
            <person name="Shu S.Q."/>
            <person name="Stapleton M."/>
            <person name="Yamada C."/>
            <person name="Ashburner M."/>
            <person name="Gelbart W.M."/>
            <person name="Rubin G.M."/>
            <person name="Lewis S.E."/>
        </authorList>
    </citation>
    <scope>GENOME REANNOTATION</scope>
    <source>
        <strain>Berkeley</strain>
    </source>
</reference>
<reference key="4">
    <citation type="journal article" date="2002" name="Genome Biol.">
        <title>A Drosophila full-length cDNA resource.</title>
        <authorList>
            <person name="Stapleton M."/>
            <person name="Carlson J.W."/>
            <person name="Brokstein P."/>
            <person name="Yu C."/>
            <person name="Champe M."/>
            <person name="George R.A."/>
            <person name="Guarin H."/>
            <person name="Kronmiller B."/>
            <person name="Pacleb J.M."/>
            <person name="Park S."/>
            <person name="Wan K.H."/>
            <person name="Rubin G.M."/>
            <person name="Celniker S.E."/>
        </authorList>
    </citation>
    <scope>NUCLEOTIDE SEQUENCE [LARGE SCALE MRNA]</scope>
    <source>
        <strain>Berkeley</strain>
        <tissue>Embryo</tissue>
    </source>
</reference>
<reference key="5">
    <citation type="journal article" date="1994" name="Proc. Natl. Acad. Sci. U.S.A.">
        <title>A cocaine-sensitive Drosophila serotonin transporter: cloning, expression, and electrophysiological characterization.</title>
        <authorList>
            <person name="Corey J.L."/>
            <person name="Quick M.W."/>
            <person name="Davidson N."/>
            <person name="Lester H.A."/>
            <person name="Guastella J."/>
        </authorList>
    </citation>
    <scope>NUCLEOTIDE SEQUENCE [MRNA] OF 6-622</scope>
    <scope>FUNCTION</scope>
    <scope>SUBCELLULAR LOCATION</scope>
    <scope>TISSUE SPECIFICITY</scope>
    <source>
        <tissue>Head</tissue>
    </source>
</reference>
<protein>
    <recommendedName>
        <fullName>Sodium-dependent serotonin transporter</fullName>
    </recommendedName>
    <alternativeName>
        <fullName>5HT transporter</fullName>
        <shortName>5HTT</shortName>
    </alternativeName>
    <alternativeName>
        <fullName>Cocaine-sensitive serotonin transporter</fullName>
    </alternativeName>
    <alternativeName>
        <fullName>dSERT1</fullName>
    </alternativeName>
</protein>
<dbReference type="EMBL" id="U04809">
    <property type="protein sequence ID" value="AAA19430.1"/>
    <property type="molecule type" value="mRNA"/>
</dbReference>
<dbReference type="EMBL" id="AE013599">
    <property type="protein sequence ID" value="AAF47200.1"/>
    <property type="molecule type" value="Genomic_DNA"/>
</dbReference>
<dbReference type="EMBL" id="AY071023">
    <property type="protein sequence ID" value="AAL48645.1"/>
    <property type="molecule type" value="mRNA"/>
</dbReference>
<dbReference type="EMBL" id="U02296">
    <property type="protein sequence ID" value="AAD10615.1"/>
    <property type="status" value="ALT_FRAME"/>
    <property type="molecule type" value="mRNA"/>
</dbReference>
<dbReference type="RefSeq" id="NP_001286839.1">
    <property type="nucleotide sequence ID" value="NM_001299910.1"/>
</dbReference>
<dbReference type="RefSeq" id="NP_523846.2">
    <property type="nucleotide sequence ID" value="NM_079122.3"/>
</dbReference>
<dbReference type="SMR" id="P51905"/>
<dbReference type="FunCoup" id="P51905">
    <property type="interactions" value="48"/>
</dbReference>
<dbReference type="STRING" id="7227.FBpp0309974"/>
<dbReference type="TCDB" id="2.A.22.1.9">
    <property type="family name" value="the neurotransmitter:sodium symporter (nss) family"/>
</dbReference>
<dbReference type="GlyCosmos" id="P51905">
    <property type="glycosylation" value="1 site, No reported glycans"/>
</dbReference>
<dbReference type="GlyGen" id="P51905">
    <property type="glycosylation" value="1 site"/>
</dbReference>
<dbReference type="PaxDb" id="7227-FBpp0072269"/>
<dbReference type="DNASU" id="37895"/>
<dbReference type="EnsemblMetazoa" id="FBtr0072362">
    <property type="protein sequence ID" value="FBpp0072269"/>
    <property type="gene ID" value="FBgn0010414"/>
</dbReference>
<dbReference type="EnsemblMetazoa" id="FBtr0343316">
    <property type="protein sequence ID" value="FBpp0309974"/>
    <property type="gene ID" value="FBgn0010414"/>
</dbReference>
<dbReference type="GeneID" id="37895"/>
<dbReference type="KEGG" id="dme:Dmel_CG4545"/>
<dbReference type="AGR" id="FB:FBgn0010414"/>
<dbReference type="CTD" id="37895"/>
<dbReference type="FlyBase" id="FBgn0010414">
    <property type="gene designation" value="SerT"/>
</dbReference>
<dbReference type="VEuPathDB" id="VectorBase:FBgn0010414"/>
<dbReference type="eggNOG" id="KOG3659">
    <property type="taxonomic scope" value="Eukaryota"/>
</dbReference>
<dbReference type="GeneTree" id="ENSGT00940000169003"/>
<dbReference type="HOGENOM" id="CLU_006855_9_0_1"/>
<dbReference type="InParanoid" id="P51905"/>
<dbReference type="OMA" id="GEDCQGN"/>
<dbReference type="OrthoDB" id="6581954at2759"/>
<dbReference type="PhylomeDB" id="P51905"/>
<dbReference type="Reactome" id="R-DME-380615">
    <property type="pathway name" value="Serotonin clearance from the synaptic cleft"/>
</dbReference>
<dbReference type="BioGRID-ORCS" id="37895">
    <property type="hits" value="0 hits in 1 CRISPR screen"/>
</dbReference>
<dbReference type="GenomeRNAi" id="37895"/>
<dbReference type="PRO" id="PR:P51905"/>
<dbReference type="Proteomes" id="UP000000803">
    <property type="component" value="Chromosome 2R"/>
</dbReference>
<dbReference type="Bgee" id="FBgn0010414">
    <property type="expression patterns" value="Expressed in adult serotonergic neuron in brain and 51 other cell types or tissues"/>
</dbReference>
<dbReference type="ExpressionAtlas" id="P51905">
    <property type="expression patterns" value="baseline and differential"/>
</dbReference>
<dbReference type="GO" id="GO:0030424">
    <property type="term" value="C:axon"/>
    <property type="evidence" value="ECO:0000314"/>
    <property type="project" value="FlyBase"/>
</dbReference>
<dbReference type="GO" id="GO:0043679">
    <property type="term" value="C:axon terminus"/>
    <property type="evidence" value="ECO:0000314"/>
    <property type="project" value="FlyBase"/>
</dbReference>
<dbReference type="GO" id="GO:0043005">
    <property type="term" value="C:neuron projection"/>
    <property type="evidence" value="ECO:0000318"/>
    <property type="project" value="GO_Central"/>
</dbReference>
<dbReference type="GO" id="GO:0005886">
    <property type="term" value="C:plasma membrane"/>
    <property type="evidence" value="ECO:0000250"/>
    <property type="project" value="FlyBase"/>
</dbReference>
<dbReference type="GO" id="GO:0045202">
    <property type="term" value="C:synapse"/>
    <property type="evidence" value="ECO:0000318"/>
    <property type="project" value="GO_Central"/>
</dbReference>
<dbReference type="GO" id="GO:0046872">
    <property type="term" value="F:metal ion binding"/>
    <property type="evidence" value="ECO:0007669"/>
    <property type="project" value="UniProtKB-KW"/>
</dbReference>
<dbReference type="GO" id="GO:0008504">
    <property type="term" value="F:monoamine transmembrane transporter activity"/>
    <property type="evidence" value="ECO:0000314"/>
    <property type="project" value="FlyBase"/>
</dbReference>
<dbReference type="GO" id="GO:0051378">
    <property type="term" value="F:serotonin binding"/>
    <property type="evidence" value="ECO:0000318"/>
    <property type="project" value="GO_Central"/>
</dbReference>
<dbReference type="GO" id="GO:0005335">
    <property type="term" value="F:serotonin:sodium:chloride symporter activity"/>
    <property type="evidence" value="ECO:0000314"/>
    <property type="project" value="FlyBase"/>
</dbReference>
<dbReference type="GO" id="GO:0006865">
    <property type="term" value="P:amino acid transport"/>
    <property type="evidence" value="ECO:0000318"/>
    <property type="project" value="GO_Central"/>
</dbReference>
<dbReference type="GO" id="GO:0015844">
    <property type="term" value="P:monoamine transport"/>
    <property type="evidence" value="ECO:0000314"/>
    <property type="project" value="FlyBase"/>
</dbReference>
<dbReference type="GO" id="GO:0006837">
    <property type="term" value="P:serotonin transport"/>
    <property type="evidence" value="ECO:0000314"/>
    <property type="project" value="FlyBase"/>
</dbReference>
<dbReference type="GO" id="GO:0051610">
    <property type="term" value="P:serotonin uptake"/>
    <property type="evidence" value="ECO:0000314"/>
    <property type="project" value="FlyBase"/>
</dbReference>
<dbReference type="GO" id="GO:0035725">
    <property type="term" value="P:sodium ion transmembrane transport"/>
    <property type="evidence" value="ECO:0000318"/>
    <property type="project" value="GO_Central"/>
</dbReference>
<dbReference type="CDD" id="cd11497">
    <property type="entry name" value="SLC6sbd_SERT-like"/>
    <property type="match status" value="1"/>
</dbReference>
<dbReference type="InterPro" id="IPR000175">
    <property type="entry name" value="Na/ntran_symport"/>
</dbReference>
<dbReference type="InterPro" id="IPR037272">
    <property type="entry name" value="SNS_sf"/>
</dbReference>
<dbReference type="NCBIfam" id="NF037979">
    <property type="entry name" value="Na_transp"/>
    <property type="match status" value="1"/>
</dbReference>
<dbReference type="PANTHER" id="PTHR11616:SF279">
    <property type="entry name" value="SODIUM-DEPENDENT SEROTONIN TRANSPORTER"/>
    <property type="match status" value="1"/>
</dbReference>
<dbReference type="PANTHER" id="PTHR11616">
    <property type="entry name" value="SODIUM/CHLORIDE DEPENDENT TRANSPORTER"/>
    <property type="match status" value="1"/>
</dbReference>
<dbReference type="Pfam" id="PF00209">
    <property type="entry name" value="SNF"/>
    <property type="match status" value="1"/>
</dbReference>
<dbReference type="PRINTS" id="PR00176">
    <property type="entry name" value="NANEUSMPORT"/>
</dbReference>
<dbReference type="SUPFAM" id="SSF161070">
    <property type="entry name" value="SNF-like"/>
    <property type="match status" value="1"/>
</dbReference>
<dbReference type="PROSITE" id="PS00610">
    <property type="entry name" value="NA_NEUROTRAN_SYMP_1"/>
    <property type="match status" value="1"/>
</dbReference>
<dbReference type="PROSITE" id="PS00754">
    <property type="entry name" value="NA_NEUROTRAN_SYMP_2"/>
    <property type="match status" value="1"/>
</dbReference>
<dbReference type="PROSITE" id="PS50267">
    <property type="entry name" value="NA_NEUROTRAN_SYMP_3"/>
    <property type="match status" value="1"/>
</dbReference>
<feature type="chain" id="PRO_0000214761" description="Sodium-dependent serotonin transporter">
    <location>
        <begin position="1"/>
        <end position="622"/>
    </location>
</feature>
<feature type="topological domain" description="Cytoplasmic" evidence="2">
    <location>
        <begin position="1"/>
        <end position="82"/>
    </location>
</feature>
<feature type="transmembrane region" description="Helical; Name=1" evidence="2">
    <location>
        <begin position="83"/>
        <end position="103"/>
    </location>
</feature>
<feature type="transmembrane region" description="Helical; Name=2" evidence="2">
    <location>
        <begin position="111"/>
        <end position="130"/>
    </location>
</feature>
<feature type="transmembrane region" description="Helical; Name=3" evidence="2">
    <location>
        <begin position="155"/>
        <end position="175"/>
    </location>
</feature>
<feature type="topological domain" description="Extracellular" evidence="2">
    <location>
        <begin position="176"/>
        <end position="244"/>
    </location>
</feature>
<feature type="transmembrane region" description="Helical; Name=4" evidence="2">
    <location>
        <begin position="245"/>
        <end position="263"/>
    </location>
</feature>
<feature type="transmembrane region" description="Helical; Name=5" evidence="2">
    <location>
        <begin position="272"/>
        <end position="289"/>
    </location>
</feature>
<feature type="transmembrane region" description="Helical; Name=6" evidence="2">
    <location>
        <begin position="325"/>
        <end position="342"/>
    </location>
</feature>
<feature type="transmembrane region" description="Helical; Name=7" evidence="2">
    <location>
        <begin position="354"/>
        <end position="375"/>
    </location>
</feature>
<feature type="transmembrane region" description="Helical; Name=8" evidence="2">
    <location>
        <begin position="408"/>
        <end position="427"/>
    </location>
</feature>
<feature type="transmembrane region" description="Helical; Name=9" evidence="2">
    <location>
        <begin position="455"/>
        <end position="473"/>
    </location>
</feature>
<feature type="transmembrane region" description="Helical; Name=10" evidence="2">
    <location>
        <begin position="489"/>
        <end position="509"/>
    </location>
</feature>
<feature type="transmembrane region" description="Helical; Name=11" evidence="2">
    <location>
        <begin position="530"/>
        <end position="549"/>
    </location>
</feature>
<feature type="transmembrane region" description="Helical; Name=12" evidence="2">
    <location>
        <begin position="568"/>
        <end position="586"/>
    </location>
</feature>
<feature type="topological domain" description="Cytoplasmic" evidence="2">
    <location>
        <begin position="587"/>
        <end position="622"/>
    </location>
</feature>
<feature type="region of interest" description="Disordered" evidence="3">
    <location>
        <begin position="1"/>
        <end position="53"/>
    </location>
</feature>
<feature type="compositionally biased region" description="Acidic residues" evidence="3">
    <location>
        <begin position="32"/>
        <end position="42"/>
    </location>
</feature>
<feature type="binding site" evidence="1">
    <location>
        <position position="89"/>
    </location>
    <ligand>
        <name>Na(+)</name>
        <dbReference type="ChEBI" id="CHEBI:29101"/>
        <label>1</label>
    </ligand>
</feature>
<feature type="binding site" evidence="1">
    <location>
        <position position="91"/>
    </location>
    <ligand>
        <name>Na(+)</name>
        <dbReference type="ChEBI" id="CHEBI:29101"/>
        <label>2</label>
    </ligand>
</feature>
<feature type="binding site" evidence="1">
    <location>
        <position position="92"/>
    </location>
    <ligand>
        <name>Na(+)</name>
        <dbReference type="ChEBI" id="CHEBI:29101"/>
        <label>1</label>
    </ligand>
</feature>
<feature type="binding site" evidence="1">
    <location>
        <position position="96"/>
    </location>
    <ligand>
        <name>Na(+)</name>
        <dbReference type="ChEBI" id="CHEBI:29101"/>
        <label>2</label>
    </ligand>
</feature>
<feature type="binding site" evidence="1">
    <location>
        <position position="328"/>
    </location>
    <ligand>
        <name>Na(+)</name>
        <dbReference type="ChEBI" id="CHEBI:29101"/>
        <label>2</label>
    </ligand>
</feature>
<feature type="binding site" evidence="1">
    <location>
        <position position="360"/>
    </location>
    <ligand>
        <name>Na(+)</name>
        <dbReference type="ChEBI" id="CHEBI:29101"/>
        <label>2</label>
    </ligand>
</feature>
<feature type="binding site" evidence="1">
    <location>
        <position position="425"/>
    </location>
    <ligand>
        <name>Na(+)</name>
        <dbReference type="ChEBI" id="CHEBI:29101"/>
        <label>1</label>
    </ligand>
</feature>
<feature type="binding site" evidence="1">
    <location>
        <position position="428"/>
    </location>
    <ligand>
        <name>Na(+)</name>
        <dbReference type="ChEBI" id="CHEBI:29101"/>
        <label>1</label>
    </ligand>
</feature>
<feature type="binding site" evidence="1">
    <location>
        <position position="429"/>
    </location>
    <ligand>
        <name>Na(+)</name>
        <dbReference type="ChEBI" id="CHEBI:29101"/>
        <label>1</label>
    </ligand>
</feature>
<feature type="glycosylation site" description="N-linked (GlcNAc...) asparagine" evidence="2">
    <location>
        <position position="211"/>
    </location>
</feature>
<feature type="disulfide bond" evidence="1">
    <location>
        <begin position="195"/>
        <end position="204"/>
    </location>
</feature>
<organism>
    <name type="scientific">Drosophila melanogaster</name>
    <name type="common">Fruit fly</name>
    <dbReference type="NCBI Taxonomy" id="7227"/>
    <lineage>
        <taxon>Eukaryota</taxon>
        <taxon>Metazoa</taxon>
        <taxon>Ecdysozoa</taxon>
        <taxon>Arthropoda</taxon>
        <taxon>Hexapoda</taxon>
        <taxon>Insecta</taxon>
        <taxon>Pterygota</taxon>
        <taxon>Neoptera</taxon>
        <taxon>Endopterygota</taxon>
        <taxon>Diptera</taxon>
        <taxon>Brachycera</taxon>
        <taxon>Muscomorpha</taxon>
        <taxon>Ephydroidea</taxon>
        <taxon>Drosophilidae</taxon>
        <taxon>Drosophila</taxon>
        <taxon>Sophophora</taxon>
    </lineage>
</organism>
<comment type="function">
    <text evidence="4 5">Terminates the action of serotonin by its high affinity sodium-dependent reuptake into presynaptic terminals.</text>
</comment>
<comment type="subcellular location">
    <subcellularLocation>
        <location evidence="4 5">Cell membrane</location>
        <topology evidence="1">Multi-pass membrane protein</topology>
    </subcellularLocation>
</comment>
<comment type="tissue specificity">
    <text evidence="4 5">Expression is specific to cell bodies in the ventral ganglion of the embryonic and larval nervous system.</text>
</comment>
<comment type="miscellaneous">
    <text>This protein is the target of psychomotor stimulants such as amphetamines or cocaine.</text>
</comment>
<comment type="similarity">
    <text evidence="6">Belongs to the sodium:neurotransmitter symporter (SNF) (TC 2.A.22) family.</text>
</comment>
<comment type="sequence caution" evidence="6">
    <conflict type="frameshift">
        <sequence resource="EMBL-CDS" id="AAD10615"/>
    </conflict>
</comment>
<evidence type="ECO:0000250" key="1">
    <source>
        <dbReference type="UniProtKB" id="Q7K4Y6"/>
    </source>
</evidence>
<evidence type="ECO:0000255" key="2"/>
<evidence type="ECO:0000256" key="3">
    <source>
        <dbReference type="SAM" id="MobiDB-lite"/>
    </source>
</evidence>
<evidence type="ECO:0000269" key="4">
    <source>
    </source>
</evidence>
<evidence type="ECO:0000269" key="5">
    <source>
    </source>
</evidence>
<evidence type="ECO:0000305" key="6"/>
<proteinExistence type="evidence at transcript level"/>
<name>SC6A4_DROME</name>
<sequence>MDRSGSSDFAGAAATTGRSNPAPWSDDKESPNNEDDSNEDDGDHTTPAKVTDPLAPKLANNERILVVSVTERTRETWGQKAEFLLAVIGFAVDLGNVWRFPYICYQNGGGAFLVPYCLFLIFGGLPLFYMELALGQFHRCGCLSIWKRICPALKGVGYAICLIDIYMGMYYNTIIGWAVYYLFASFTSKLPWTSCDNPWNTENCMQVTSENFTELATSPAKEFFERKVLESYKGNGLDFMGPVKPTLALCVFGVFVLVYFSLWKGVRSAGKVVWVTALAPYVVLIILLVRGVSLPGADEGIKYYLTPEWHKLKNSKVWIDAASQIFFSLGPGFGTLLALSSYNKFNNNCYRDALITSSINCLTSFLAGFVIFSVLGYMAYVQKTSIDKVGLEGPGLVFIVYPEAIATMSGSVFWSIIFFLMLITLGLDSTFGGLEAMITALCDEYPRVIGRRRELFVLLLLAFIFLCALPTMTYGGVVLVNFLNVYGPGLAILFVVFVEAAGVFWFYGVDRFSSDVEQMLGSKPGLFWRICWTYISPVFLLTIFIFSIMGYKEMLGEEYYYPDWSYQVGWAVTCSSVLCIPMYIIYKFFFASKGGCRQRLQESFQPEDNCGSVVPGQQGTSV</sequence>
<gene>
    <name type="primary">SerT</name>
    <name type="ORF">CG4545</name>
</gene>
<keyword id="KW-1003">Cell membrane</keyword>
<keyword id="KW-1015">Disulfide bond</keyword>
<keyword id="KW-0325">Glycoprotein</keyword>
<keyword id="KW-0472">Membrane</keyword>
<keyword id="KW-0479">Metal-binding</keyword>
<keyword id="KW-0532">Neurotransmitter transport</keyword>
<keyword id="KW-1185">Reference proteome</keyword>
<keyword id="KW-0915">Sodium</keyword>
<keyword id="KW-0769">Symport</keyword>
<keyword id="KW-0812">Transmembrane</keyword>
<keyword id="KW-1133">Transmembrane helix</keyword>
<keyword id="KW-0813">Transport</keyword>
<accession>P51905</accession>
<accession>Q23969</accession>
<accession>Q9W177</accession>